<protein>
    <recommendedName>
        <fullName>UPF0758 protein Lm4b_01560</fullName>
    </recommendedName>
</protein>
<name>Y1560_LISMC</name>
<proteinExistence type="inferred from homology"/>
<feature type="chain" id="PRO_1000201878" description="UPF0758 protein Lm4b_01560">
    <location>
        <begin position="1"/>
        <end position="224"/>
    </location>
</feature>
<feature type="domain" description="MPN" evidence="1">
    <location>
        <begin position="102"/>
        <end position="224"/>
    </location>
</feature>
<feature type="short sequence motif" description="JAMM motif" evidence="1">
    <location>
        <begin position="173"/>
        <end position="186"/>
    </location>
</feature>
<feature type="binding site" evidence="1">
    <location>
        <position position="173"/>
    </location>
    <ligand>
        <name>Zn(2+)</name>
        <dbReference type="ChEBI" id="CHEBI:29105"/>
        <note>catalytic</note>
    </ligand>
</feature>
<feature type="binding site" evidence="1">
    <location>
        <position position="175"/>
    </location>
    <ligand>
        <name>Zn(2+)</name>
        <dbReference type="ChEBI" id="CHEBI:29105"/>
        <note>catalytic</note>
    </ligand>
</feature>
<feature type="binding site" evidence="1">
    <location>
        <position position="186"/>
    </location>
    <ligand>
        <name>Zn(2+)</name>
        <dbReference type="ChEBI" id="CHEBI:29105"/>
        <note>catalytic</note>
    </ligand>
</feature>
<dbReference type="EMBL" id="FM242711">
    <property type="protein sequence ID" value="CAS05321.1"/>
    <property type="molecule type" value="Genomic_DNA"/>
</dbReference>
<dbReference type="SMR" id="C1KVJ6"/>
<dbReference type="KEGG" id="lmc:Lm4b_01560"/>
<dbReference type="HOGENOM" id="CLU_073529_0_2_9"/>
<dbReference type="GO" id="GO:0046872">
    <property type="term" value="F:metal ion binding"/>
    <property type="evidence" value="ECO:0007669"/>
    <property type="project" value="UniProtKB-KW"/>
</dbReference>
<dbReference type="GO" id="GO:0008237">
    <property type="term" value="F:metallopeptidase activity"/>
    <property type="evidence" value="ECO:0007669"/>
    <property type="project" value="UniProtKB-KW"/>
</dbReference>
<dbReference type="GO" id="GO:0006508">
    <property type="term" value="P:proteolysis"/>
    <property type="evidence" value="ECO:0007669"/>
    <property type="project" value="UniProtKB-KW"/>
</dbReference>
<dbReference type="CDD" id="cd08071">
    <property type="entry name" value="MPN_DUF2466"/>
    <property type="match status" value="1"/>
</dbReference>
<dbReference type="FunFam" id="3.40.140.10:FF:000063">
    <property type="entry name" value="DNA repair protein RadC"/>
    <property type="match status" value="1"/>
</dbReference>
<dbReference type="Gene3D" id="1.10.150.20">
    <property type="entry name" value="5' to 3' exonuclease, C-terminal subdomain"/>
    <property type="match status" value="1"/>
</dbReference>
<dbReference type="Gene3D" id="3.40.140.10">
    <property type="entry name" value="Cytidine Deaminase, domain 2"/>
    <property type="match status" value="1"/>
</dbReference>
<dbReference type="InterPro" id="IPR037518">
    <property type="entry name" value="MPN"/>
</dbReference>
<dbReference type="InterPro" id="IPR025657">
    <property type="entry name" value="RadC_JAB"/>
</dbReference>
<dbReference type="InterPro" id="IPR010994">
    <property type="entry name" value="RuvA_2-like"/>
</dbReference>
<dbReference type="InterPro" id="IPR001405">
    <property type="entry name" value="UPF0758"/>
</dbReference>
<dbReference type="InterPro" id="IPR020891">
    <property type="entry name" value="UPF0758_CS"/>
</dbReference>
<dbReference type="InterPro" id="IPR046778">
    <property type="entry name" value="UPF0758_N"/>
</dbReference>
<dbReference type="NCBIfam" id="NF000642">
    <property type="entry name" value="PRK00024.1"/>
    <property type="match status" value="1"/>
</dbReference>
<dbReference type="NCBIfam" id="TIGR00608">
    <property type="entry name" value="radc"/>
    <property type="match status" value="1"/>
</dbReference>
<dbReference type="PANTHER" id="PTHR30471">
    <property type="entry name" value="DNA REPAIR PROTEIN RADC"/>
    <property type="match status" value="1"/>
</dbReference>
<dbReference type="PANTHER" id="PTHR30471:SF3">
    <property type="entry name" value="UPF0758 PROTEIN YEES-RELATED"/>
    <property type="match status" value="1"/>
</dbReference>
<dbReference type="Pfam" id="PF04002">
    <property type="entry name" value="RadC"/>
    <property type="match status" value="1"/>
</dbReference>
<dbReference type="Pfam" id="PF20582">
    <property type="entry name" value="UPF0758_N"/>
    <property type="match status" value="1"/>
</dbReference>
<dbReference type="SUPFAM" id="SSF102712">
    <property type="entry name" value="JAB1/MPN domain"/>
    <property type="match status" value="1"/>
</dbReference>
<dbReference type="SUPFAM" id="SSF47781">
    <property type="entry name" value="RuvA domain 2-like"/>
    <property type="match status" value="1"/>
</dbReference>
<dbReference type="PROSITE" id="PS50249">
    <property type="entry name" value="MPN"/>
    <property type="match status" value="1"/>
</dbReference>
<dbReference type="PROSITE" id="PS01302">
    <property type="entry name" value="UPF0758"/>
    <property type="match status" value="1"/>
</dbReference>
<gene>
    <name type="ordered locus">Lm4b_01560</name>
</gene>
<organism>
    <name type="scientific">Listeria monocytogenes serotype 4b (strain CLIP80459)</name>
    <dbReference type="NCBI Taxonomy" id="568819"/>
    <lineage>
        <taxon>Bacteria</taxon>
        <taxon>Bacillati</taxon>
        <taxon>Bacillota</taxon>
        <taxon>Bacilli</taxon>
        <taxon>Bacillales</taxon>
        <taxon>Listeriaceae</taxon>
        <taxon>Listeria</taxon>
    </lineage>
</organism>
<keyword id="KW-0378">Hydrolase</keyword>
<keyword id="KW-0479">Metal-binding</keyword>
<keyword id="KW-0482">Metalloprotease</keyword>
<keyword id="KW-0645">Protease</keyword>
<keyword id="KW-0862">Zinc</keyword>
<evidence type="ECO:0000255" key="1">
    <source>
        <dbReference type="PROSITE-ProRule" id="PRU01182"/>
    </source>
</evidence>
<evidence type="ECO:0000305" key="2"/>
<reference key="1">
    <citation type="journal article" date="2012" name="BMC Genomics">
        <title>Comparative genomics and transcriptomics of lineages I, II, and III strains of Listeria monocytogenes.</title>
        <authorList>
            <person name="Hain T."/>
            <person name="Ghai R."/>
            <person name="Billion A."/>
            <person name="Kuenne C.T."/>
            <person name="Steinweg C."/>
            <person name="Izar B."/>
            <person name="Mohamed W."/>
            <person name="Mraheil M."/>
            <person name="Domann E."/>
            <person name="Schaffrath S."/>
            <person name="Karst U."/>
            <person name="Goesmann A."/>
            <person name="Oehm S."/>
            <person name="Puhler A."/>
            <person name="Merkl R."/>
            <person name="Vorwerk S."/>
            <person name="Glaser P."/>
            <person name="Garrido P."/>
            <person name="Rusniok C."/>
            <person name="Buchrieser C."/>
            <person name="Goebel W."/>
            <person name="Chakraborty T."/>
        </authorList>
    </citation>
    <scope>NUCLEOTIDE SEQUENCE [LARGE SCALE GENOMIC DNA]</scope>
    <source>
        <strain>CLIP80459</strain>
    </source>
</reference>
<sequence>MLIHEISENEKPREKLQNYGIEALSSSELVALIIETGTKNESVLTIANRIIMKFKNVGEMQYASIEEFQLVNGIGIAKASKIMAAIELGRRIGIVTEQEEVVVRCPEDAVKLVMPELAFLFQEHFHCLFLNTKNQVIYRQTIFVGGLNASIVHPREVFRLALRKSAASIMCFHNHPSGDPTPSSEDLLVTKRLAEAGNIVGITLLDHIIIGKNKYISLKEKGYF</sequence>
<comment type="similarity">
    <text evidence="2">Belongs to the UPF0758 family.</text>
</comment>
<accession>C1KVJ6</accession>